<gene>
    <name evidence="1" type="primary">miaA</name>
    <name type="ordered locus">Xfasm12_0071</name>
</gene>
<name>MIAA_XYLFM</name>
<feature type="chain" id="PRO_1000098704" description="tRNA dimethylallyltransferase">
    <location>
        <begin position="1"/>
        <end position="317"/>
    </location>
</feature>
<feature type="region of interest" description="Interaction with substrate tRNA" evidence="1">
    <location>
        <begin position="39"/>
        <end position="42"/>
    </location>
</feature>
<feature type="region of interest" description="Interaction with substrate tRNA" evidence="1">
    <location>
        <begin position="163"/>
        <end position="167"/>
    </location>
</feature>
<feature type="binding site" evidence="1">
    <location>
        <begin position="14"/>
        <end position="21"/>
    </location>
    <ligand>
        <name>ATP</name>
        <dbReference type="ChEBI" id="CHEBI:30616"/>
    </ligand>
</feature>
<feature type="binding site" evidence="1">
    <location>
        <begin position="16"/>
        <end position="21"/>
    </location>
    <ligand>
        <name>substrate</name>
    </ligand>
</feature>
<feature type="site" description="Interaction with substrate tRNA" evidence="1">
    <location>
        <position position="105"/>
    </location>
</feature>
<feature type="site" description="Interaction with substrate tRNA" evidence="1">
    <location>
        <position position="127"/>
    </location>
</feature>
<keyword id="KW-0067">ATP-binding</keyword>
<keyword id="KW-0460">Magnesium</keyword>
<keyword id="KW-0547">Nucleotide-binding</keyword>
<keyword id="KW-0808">Transferase</keyword>
<keyword id="KW-0819">tRNA processing</keyword>
<accession>B0U1E8</accession>
<dbReference type="EC" id="2.5.1.75" evidence="1"/>
<dbReference type="EMBL" id="CP000941">
    <property type="protein sequence ID" value="ACA11113.1"/>
    <property type="molecule type" value="Genomic_DNA"/>
</dbReference>
<dbReference type="RefSeq" id="WP_004085557.1">
    <property type="nucleotide sequence ID" value="NC_010513.1"/>
</dbReference>
<dbReference type="SMR" id="B0U1E8"/>
<dbReference type="KEGG" id="xfm:Xfasm12_0071"/>
<dbReference type="HOGENOM" id="CLU_032616_0_0_6"/>
<dbReference type="GO" id="GO:0005524">
    <property type="term" value="F:ATP binding"/>
    <property type="evidence" value="ECO:0007669"/>
    <property type="project" value="UniProtKB-UniRule"/>
</dbReference>
<dbReference type="GO" id="GO:0052381">
    <property type="term" value="F:tRNA dimethylallyltransferase activity"/>
    <property type="evidence" value="ECO:0007669"/>
    <property type="project" value="UniProtKB-UniRule"/>
</dbReference>
<dbReference type="GO" id="GO:0006400">
    <property type="term" value="P:tRNA modification"/>
    <property type="evidence" value="ECO:0007669"/>
    <property type="project" value="TreeGrafter"/>
</dbReference>
<dbReference type="FunFam" id="1.10.20.140:FF:000001">
    <property type="entry name" value="tRNA dimethylallyltransferase"/>
    <property type="match status" value="1"/>
</dbReference>
<dbReference type="Gene3D" id="1.10.20.140">
    <property type="match status" value="1"/>
</dbReference>
<dbReference type="Gene3D" id="3.40.50.300">
    <property type="entry name" value="P-loop containing nucleotide triphosphate hydrolases"/>
    <property type="match status" value="1"/>
</dbReference>
<dbReference type="HAMAP" id="MF_00185">
    <property type="entry name" value="IPP_trans"/>
    <property type="match status" value="1"/>
</dbReference>
<dbReference type="InterPro" id="IPR039657">
    <property type="entry name" value="Dimethylallyltransferase"/>
</dbReference>
<dbReference type="InterPro" id="IPR018022">
    <property type="entry name" value="IPT"/>
</dbReference>
<dbReference type="InterPro" id="IPR027417">
    <property type="entry name" value="P-loop_NTPase"/>
</dbReference>
<dbReference type="NCBIfam" id="TIGR00174">
    <property type="entry name" value="miaA"/>
    <property type="match status" value="1"/>
</dbReference>
<dbReference type="PANTHER" id="PTHR11088">
    <property type="entry name" value="TRNA DIMETHYLALLYLTRANSFERASE"/>
    <property type="match status" value="1"/>
</dbReference>
<dbReference type="PANTHER" id="PTHR11088:SF60">
    <property type="entry name" value="TRNA DIMETHYLALLYLTRANSFERASE"/>
    <property type="match status" value="1"/>
</dbReference>
<dbReference type="Pfam" id="PF01715">
    <property type="entry name" value="IPPT"/>
    <property type="match status" value="1"/>
</dbReference>
<dbReference type="SUPFAM" id="SSF52540">
    <property type="entry name" value="P-loop containing nucleoside triphosphate hydrolases"/>
    <property type="match status" value="1"/>
</dbReference>
<reference key="1">
    <citation type="journal article" date="2010" name="J. Bacteriol.">
        <title>Whole genome sequences of two Xylella fastidiosa strains (M12 and M23) causing almond leaf scorch disease in California.</title>
        <authorList>
            <person name="Chen J."/>
            <person name="Xie G."/>
            <person name="Han S."/>
            <person name="Chertkov O."/>
            <person name="Sims D."/>
            <person name="Civerolo E.L."/>
        </authorList>
    </citation>
    <scope>NUCLEOTIDE SEQUENCE [LARGE SCALE GENOMIC DNA]</scope>
    <source>
        <strain>M12</strain>
    </source>
</reference>
<proteinExistence type="inferred from homology"/>
<protein>
    <recommendedName>
        <fullName evidence="1">tRNA dimethylallyltransferase</fullName>
        <ecNumber evidence="1">2.5.1.75</ecNumber>
    </recommendedName>
    <alternativeName>
        <fullName evidence="1">Dimethylallyl diphosphate:tRNA dimethylallyltransferase</fullName>
        <shortName evidence="1">DMAPP:tRNA dimethylallyltransferase</shortName>
        <shortName evidence="1">DMATase</shortName>
    </alternativeName>
    <alternativeName>
        <fullName evidence="1">Isopentenyl-diphosphate:tRNA isopentenyltransferase</fullName>
        <shortName evidence="1">IPP transferase</shortName>
        <shortName evidence="1">IPPT</shortName>
        <shortName evidence="1">IPTase</shortName>
    </alternativeName>
</protein>
<comment type="function">
    <text evidence="1">Catalyzes the transfer of a dimethylallyl group onto the adenine at position 37 in tRNAs that read codons beginning with uridine, leading to the formation of N6-(dimethylallyl)adenosine (i(6)A).</text>
</comment>
<comment type="catalytic activity">
    <reaction evidence="1">
        <text>adenosine(37) in tRNA + dimethylallyl diphosphate = N(6)-dimethylallyladenosine(37) in tRNA + diphosphate</text>
        <dbReference type="Rhea" id="RHEA:26482"/>
        <dbReference type="Rhea" id="RHEA-COMP:10162"/>
        <dbReference type="Rhea" id="RHEA-COMP:10375"/>
        <dbReference type="ChEBI" id="CHEBI:33019"/>
        <dbReference type="ChEBI" id="CHEBI:57623"/>
        <dbReference type="ChEBI" id="CHEBI:74411"/>
        <dbReference type="ChEBI" id="CHEBI:74415"/>
        <dbReference type="EC" id="2.5.1.75"/>
    </reaction>
</comment>
<comment type="cofactor">
    <cofactor evidence="1">
        <name>Mg(2+)</name>
        <dbReference type="ChEBI" id="CHEBI:18420"/>
    </cofactor>
</comment>
<comment type="subunit">
    <text evidence="1">Monomer.</text>
</comment>
<comment type="similarity">
    <text evidence="1">Belongs to the IPP transferase family.</text>
</comment>
<sequence length="317" mass="35420">MPADTRPAAIVLMGPTASGKSQLAIDIAKRWGGEVISVDSVLVYRGLDIGTAKPNAAMRASVPHHLIDICEPWETYSAADFAHDARAAIDMIVRRGALPILTGGTGLYFRALLAGLSDMPPAHPEIRAMIAAEAKRDSWATLHTRLAEVDAITAARIHATDPQRIQRALEVYLVSGRSMSDWQNQPPKQRLPLRVLKLVLAPTHRKVLHFRIAQRFKAMLDNGLLAEVNALRTHPSIHAMARPLDLPAMRAVGYRQCWEHLDGMYTAEMLYQRSVAATRQLAKRQLTWLRGELDALWFDPEHDQSRIEKVMEAFLNR</sequence>
<organism>
    <name type="scientific">Xylella fastidiosa (strain M12)</name>
    <dbReference type="NCBI Taxonomy" id="405440"/>
    <lineage>
        <taxon>Bacteria</taxon>
        <taxon>Pseudomonadati</taxon>
        <taxon>Pseudomonadota</taxon>
        <taxon>Gammaproteobacteria</taxon>
        <taxon>Lysobacterales</taxon>
        <taxon>Lysobacteraceae</taxon>
        <taxon>Xylella</taxon>
    </lineage>
</organism>
<evidence type="ECO:0000255" key="1">
    <source>
        <dbReference type="HAMAP-Rule" id="MF_00185"/>
    </source>
</evidence>